<comment type="function">
    <text evidence="1 4">Plays a role in maintaining mitochondrial morphology (PubMed:21248201). May act as a component of the MICOS complex, a large protein complex of the mitochondria (By similarity).</text>
</comment>
<comment type="subunit">
    <text evidence="1">Component of the mitochondrial contact site and cristae organizing system (MICOS) complex.</text>
</comment>
<comment type="subcellular location">
    <subcellularLocation>
        <location evidence="1">Mitochondrion inner membrane</location>
        <topology evidence="1">Lipid-anchor</topology>
        <orientation evidence="1">Intermembrane side</orientation>
    </subcellularLocation>
</comment>
<comment type="disruption phenotype">
    <text evidence="4">Abnormal mitochondrial morphology with localized swellings and tubular extensions. Double knockout with moma-1 or immt-1 results in reduced or no brood, poor growth and withered gonads. Furthermore, in double knockouts with moma-1, the gonads contain fewer mitochondria.</text>
</comment>
<comment type="similarity">
    <text evidence="6">Belongs to the MICOS complex subunit Mic19 family. Metazoan Mic19 subfamily.</text>
</comment>
<dbReference type="EMBL" id="BX284602">
    <property type="protein sequence ID" value="CAB01650.1"/>
    <property type="molecule type" value="Genomic_DNA"/>
</dbReference>
<dbReference type="PIR" id="T23786">
    <property type="entry name" value="T23786"/>
</dbReference>
<dbReference type="RefSeq" id="NP_496012.1">
    <property type="nucleotide sequence ID" value="NM_063611.9"/>
</dbReference>
<dbReference type="SMR" id="Q21551"/>
<dbReference type="FunCoup" id="Q21551">
    <property type="interactions" value="309"/>
</dbReference>
<dbReference type="STRING" id="6239.M176.3.1"/>
<dbReference type="PaxDb" id="6239-M176.3"/>
<dbReference type="EnsemblMetazoa" id="M176.3.1">
    <property type="protein sequence ID" value="M176.3.1"/>
    <property type="gene ID" value="WBGene00010942"/>
</dbReference>
<dbReference type="GeneID" id="174494"/>
<dbReference type="KEGG" id="cel:CELE_M176.3"/>
<dbReference type="UCSC" id="M176.3.1">
    <property type="organism name" value="c. elegans"/>
</dbReference>
<dbReference type="AGR" id="WB:WBGene00010942"/>
<dbReference type="CTD" id="174494"/>
<dbReference type="WormBase" id="M176.3">
    <property type="protein sequence ID" value="CE12464"/>
    <property type="gene ID" value="WBGene00010942"/>
    <property type="gene designation" value="chch-3"/>
</dbReference>
<dbReference type="eggNOG" id="KOG4083">
    <property type="taxonomic scope" value="Eukaryota"/>
</dbReference>
<dbReference type="GeneTree" id="ENSGT00390000000903"/>
<dbReference type="HOGENOM" id="CLU_1549035_0_0_1"/>
<dbReference type="InParanoid" id="Q21551"/>
<dbReference type="OMA" id="TDLMECI"/>
<dbReference type="OrthoDB" id="70030at2759"/>
<dbReference type="PRO" id="PR:Q21551"/>
<dbReference type="Proteomes" id="UP000001940">
    <property type="component" value="Chromosome II"/>
</dbReference>
<dbReference type="Bgee" id="WBGene00010942">
    <property type="expression patterns" value="Expressed in embryo and 4 other cell types or tissues"/>
</dbReference>
<dbReference type="GO" id="GO:0061617">
    <property type="term" value="C:MICOS complex"/>
    <property type="evidence" value="ECO:0000318"/>
    <property type="project" value="GO_Central"/>
</dbReference>
<dbReference type="GO" id="GO:0007007">
    <property type="term" value="P:inner mitochondrial membrane organization"/>
    <property type="evidence" value="ECO:0000318"/>
    <property type="project" value="GO_Central"/>
</dbReference>
<dbReference type="InterPro" id="IPR052632">
    <property type="entry name" value="MICOS_subunit_Mic19"/>
</dbReference>
<dbReference type="PANTHER" id="PTHR21588">
    <property type="entry name" value="COILED-COIL-HELIX-COILED-COIL-HELIX DOMAIN CONTAINING 6"/>
    <property type="match status" value="1"/>
</dbReference>
<dbReference type="PANTHER" id="PTHR21588:SF18">
    <property type="entry name" value="MICOS COMPLEX SUBUNIT MIC19"/>
    <property type="match status" value="1"/>
</dbReference>
<dbReference type="PROSITE" id="PS51808">
    <property type="entry name" value="CHCH"/>
    <property type="match status" value="1"/>
</dbReference>
<evidence type="ECO:0000250" key="1">
    <source>
        <dbReference type="UniProtKB" id="Q9NX63"/>
    </source>
</evidence>
<evidence type="ECO:0000255" key="2"/>
<evidence type="ECO:0000255" key="3">
    <source>
        <dbReference type="PROSITE-ProRule" id="PRU01150"/>
    </source>
</evidence>
<evidence type="ECO:0000269" key="4">
    <source>
    </source>
</evidence>
<evidence type="ECO:0000303" key="5">
    <source>
    </source>
</evidence>
<evidence type="ECO:0000305" key="6"/>
<evidence type="ECO:0000312" key="7">
    <source>
        <dbReference type="Proteomes" id="UP000001940"/>
    </source>
</evidence>
<evidence type="ECO:0000312" key="8">
    <source>
        <dbReference type="WormBase" id="M176.3"/>
    </source>
</evidence>
<feature type="initiator methionine" description="Removed" evidence="2">
    <location>
        <position position="1"/>
    </location>
</feature>
<feature type="chain" id="PRO_0000438528" description="MICOS complex subunit MIC19" evidence="6">
    <location>
        <begin position="2"/>
        <end position="169"/>
    </location>
</feature>
<feature type="domain" description="CHCH" evidence="3">
    <location>
        <begin position="123"/>
        <end position="165"/>
    </location>
</feature>
<feature type="short sequence motif" description="Cx9C motif 1" evidence="3">
    <location>
        <begin position="126"/>
        <end position="136"/>
    </location>
</feature>
<feature type="short sequence motif" description="Cx9C motif 2" evidence="3">
    <location>
        <begin position="147"/>
        <end position="157"/>
    </location>
</feature>
<feature type="lipid moiety-binding region" description="N-myristoyl glycine" evidence="2">
    <location>
        <position position="2"/>
    </location>
</feature>
<feature type="disulfide bond" evidence="3">
    <location>
        <begin position="126"/>
        <end position="157"/>
    </location>
</feature>
<feature type="disulfide bond" evidence="3">
    <location>
        <begin position="136"/>
        <end position="147"/>
    </location>
</feature>
<gene>
    <name evidence="5 8" type="primary">chch-3</name>
    <name evidence="8" type="ORF">M176.3</name>
</gene>
<protein>
    <recommendedName>
        <fullName evidence="1">MICOS complex subunit MIC19</fullName>
    </recommendedName>
    <alternativeName>
        <fullName evidence="1">Coiled-coil-helix-coiled-coil-helix domain-containing protein 3</fullName>
    </alternativeName>
</protein>
<reference evidence="7" key="1">
    <citation type="journal article" date="1998" name="Science">
        <title>Genome sequence of the nematode C. elegans: a platform for investigating biology.</title>
        <authorList>
            <consortium name="The C. elegans sequencing consortium"/>
        </authorList>
    </citation>
    <scope>NUCLEOTIDE SEQUENCE [LARGE SCALE GENOMIC DNA]</scope>
    <source>
        <strain evidence="7">Bristol N2</strain>
    </source>
</reference>
<reference evidence="6" key="2">
    <citation type="journal article" date="2011" name="Mol. Biol. Cell">
        <title>A novel mitochondrial outer membrane protein, MOMA-1, that affects cristae morphology in Caenorhabditis elegans.</title>
        <authorList>
            <person name="Head B.P."/>
            <person name="Zulaika M."/>
            <person name="Ryazantsev S."/>
            <person name="van der Bliek A.M."/>
        </authorList>
    </citation>
    <scope>FUNCTION</scope>
    <scope>DISRUPTION PHENOTYPE</scope>
</reference>
<keyword id="KW-1015">Disulfide bond</keyword>
<keyword id="KW-0449">Lipoprotein</keyword>
<keyword id="KW-0472">Membrane</keyword>
<keyword id="KW-0496">Mitochondrion</keyword>
<keyword id="KW-0999">Mitochondrion inner membrane</keyword>
<keyword id="KW-0519">Myristate</keyword>
<keyword id="KW-1185">Reference proteome</keyword>
<name>CHCH3_CAEEL</name>
<organism evidence="7">
    <name type="scientific">Caenorhabditis elegans</name>
    <dbReference type="NCBI Taxonomy" id="6239"/>
    <lineage>
        <taxon>Eukaryota</taxon>
        <taxon>Metazoa</taxon>
        <taxon>Ecdysozoa</taxon>
        <taxon>Nematoda</taxon>
        <taxon>Chromadorea</taxon>
        <taxon>Rhabditida</taxon>
        <taxon>Rhabditina</taxon>
        <taxon>Rhabditomorpha</taxon>
        <taxon>Rhabditoidea</taxon>
        <taxon>Rhabditidae</taxon>
        <taxon>Peloderinae</taxon>
        <taxon>Caenorhabditis</taxon>
    </lineage>
</organism>
<accession>Q21551</accession>
<proteinExistence type="inferred from homology"/>
<sequence>MGASQSAEQEARPEVVRIDRNEIPEEYKTVGVSSDVVSRVNATRVAGNDGESDRLRQELAREREEKARLREDMAKLSQLQQRKTAGISAAPVSISGNDLEERKKIFDDTVERVQKQFFAYHRENVCQDNENEIVRCLQENPGRVLKCAPLTEAFEKCVGEFRQQVLKGN</sequence>